<sequence>MVKYGLFLGCNISFNRPDVEVSMRSIFPALGIELDDLVGQSCCPTWGTMPSVDIVGWCAVAARNLALGEEKGIDLMTACNSCYGSLNEARHKMLTNPEIHRKVNEILATIGKRYEGKAKCRHVAWVLYKDVGLEKLKESIKYTLDGITVAVQPGCHFLWPSEVYPDKEEDPFNPKVLRELCEALGAEAPYYTKLIECCGMGALRSTDPEKSFKLVKEKMENIKEEIDADLIVTTCSSCLIQLDDAQERLRKEGKINFSIPVLHLVQVIALCMGFDPEKVAGICVTPRDEIIKRILENKR</sequence>
<evidence type="ECO:0000269" key="1">
    <source>
    </source>
</evidence>
<evidence type="ECO:0000305" key="2"/>
<name>HDLB_ARCPA</name>
<dbReference type="EC" id="1.8.-.-"/>
<dbReference type="EMBL" id="CP001857">
    <property type="protein sequence ID" value="ADB58599.1"/>
    <property type="molecule type" value="Genomic_DNA"/>
</dbReference>
<dbReference type="RefSeq" id="WP_012940935.1">
    <property type="nucleotide sequence ID" value="NC_013741.1"/>
</dbReference>
<dbReference type="SMR" id="P84623"/>
<dbReference type="STRING" id="572546.Arcpr_1553"/>
<dbReference type="PaxDb" id="572546-Arcpr_1553"/>
<dbReference type="GeneID" id="8740243"/>
<dbReference type="KEGG" id="apo:Arcpr_1553"/>
<dbReference type="eggNOG" id="arCOG00338">
    <property type="taxonomic scope" value="Archaea"/>
</dbReference>
<dbReference type="HOGENOM" id="CLU_052147_1_0_2"/>
<dbReference type="OrthoDB" id="144689at2157"/>
<dbReference type="Proteomes" id="UP000001901">
    <property type="component" value="Chromosome"/>
</dbReference>
<dbReference type="GO" id="GO:0005737">
    <property type="term" value="C:cytoplasm"/>
    <property type="evidence" value="ECO:0007669"/>
    <property type="project" value="UniProtKB-SubCell"/>
</dbReference>
<dbReference type="GO" id="GO:0016491">
    <property type="term" value="F:oxidoreductase activity"/>
    <property type="evidence" value="ECO:0007669"/>
    <property type="project" value="UniProtKB-KW"/>
</dbReference>
<dbReference type="Gene3D" id="1.20.1050.140">
    <property type="match status" value="1"/>
</dbReference>
<dbReference type="InterPro" id="IPR004017">
    <property type="entry name" value="Cys_rich_dom"/>
</dbReference>
<dbReference type="InterPro" id="IPR051278">
    <property type="entry name" value="HdrB/HdrD_reductase"/>
</dbReference>
<dbReference type="PANTHER" id="PTHR42947">
    <property type="entry name" value="COB--COM HETERODISULFIDE REDUCTASE SUBUNIT B 1"/>
    <property type="match status" value="1"/>
</dbReference>
<dbReference type="PANTHER" id="PTHR42947:SF1">
    <property type="entry name" value="COB--COM HETERODISULFIDE REDUCTASE SUBUNIT B 1"/>
    <property type="match status" value="1"/>
</dbReference>
<dbReference type="Pfam" id="PF02754">
    <property type="entry name" value="CCG"/>
    <property type="match status" value="2"/>
</dbReference>
<protein>
    <recommendedName>
        <fullName>Heterodisulfide reductase subunit B-like protein</fullName>
        <ecNumber>1.8.-.-</ecNumber>
    </recommendedName>
</protein>
<proteinExistence type="evidence at protein level"/>
<organism>
    <name type="scientific">Archaeoglobus profundus (strain DSM 5631 / JCM 9629 / NBRC 100127 / Av18)</name>
    <dbReference type="NCBI Taxonomy" id="572546"/>
    <lineage>
        <taxon>Archaea</taxon>
        <taxon>Methanobacteriati</taxon>
        <taxon>Methanobacteriota</taxon>
        <taxon>Archaeoglobi</taxon>
        <taxon>Archaeoglobales</taxon>
        <taxon>Archaeoglobaceae</taxon>
        <taxon>Archaeoglobus</taxon>
    </lineage>
</organism>
<accession>P84623</accession>
<accession>D2REQ5</accession>
<keyword id="KW-0963">Cytoplasm</keyword>
<keyword id="KW-0903">Direct protein sequencing</keyword>
<keyword id="KW-0560">Oxidoreductase</keyword>
<keyword id="KW-1185">Reference proteome</keyword>
<gene>
    <name type="primary">hdlB</name>
    <name type="ordered locus">Arcpr_1553</name>
</gene>
<comment type="function">
    <text evidence="1">Has oxidoreductase activity. The Hdl and Mvh subunits may together mediate electron transfer from hydrogen to an unidentified electron acceptor on the cytoplasmic side of the membrane.</text>
</comment>
<comment type="subunit">
    <text evidence="1">The heterodisulfide reductase is composed of three subunits; HdlA, HdlB and HdlC. It forms a complex with the F420-non-reducing hydrogenase (Mvh), which provides the reducing equivalents to the heterodisulfide reductase.</text>
</comment>
<comment type="subcellular location">
    <subcellularLocation>
        <location evidence="1">Cytoplasm</location>
    </subcellularLocation>
</comment>
<comment type="similarity">
    <text evidence="2">Belongs to the HdrB family.</text>
</comment>
<reference key="1">
    <citation type="journal article" date="2010" name="Stand. Genomic Sci.">
        <title>Complete genome sequence of Archaeoglobus profundus type strain (AV18).</title>
        <authorList>
            <person name="von Jan M."/>
            <person name="Lapidus A."/>
            <person name="Del Rio T.G."/>
            <person name="Copeland A."/>
            <person name="Tice H."/>
            <person name="Cheng J.F."/>
            <person name="Lucas S."/>
            <person name="Chen F."/>
            <person name="Nolan M."/>
            <person name="Goodwin L."/>
            <person name="Han C."/>
            <person name="Pitluck S."/>
            <person name="Liolios K."/>
            <person name="Ivanova N."/>
            <person name="Mavromatis K."/>
            <person name="Ovchinnikova G."/>
            <person name="Chertkov O."/>
            <person name="Pati A."/>
            <person name="Chen A."/>
            <person name="Palaniappan K."/>
            <person name="Land M."/>
            <person name="Hauser L."/>
            <person name="Chang Y.J."/>
            <person name="Jeffries C.D."/>
            <person name="Saunders E."/>
            <person name="Brettin T."/>
            <person name="Detter J.C."/>
            <person name="Chain P."/>
            <person name="Eichinger K."/>
            <person name="Huber H."/>
            <person name="Spring S."/>
            <person name="Rohde M."/>
            <person name="Goker M."/>
            <person name="Wirth R."/>
            <person name="Woyke T."/>
            <person name="Bristow J."/>
            <person name="Eisen J.A."/>
            <person name="Markowitz V."/>
            <person name="Hugenholtz P."/>
            <person name="Kyrpides N.C."/>
            <person name="Klenk H.P."/>
        </authorList>
    </citation>
    <scope>NUCLEOTIDE SEQUENCE [LARGE SCALE GENOMIC DNA]</scope>
    <source>
        <strain>DSM 5631 / JCM 9629 / NBRC 100127 / Av18</strain>
    </source>
</reference>
<reference evidence="2" key="2">
    <citation type="journal article" date="2004" name="Eur. J. Biochem.">
        <title>Two distinct heterodisulfide reductase-like enzymes in the sulfate-reducing archaeon Archaeoglobus profundus.</title>
        <authorList>
            <person name="Mander G.J."/>
            <person name="Pierik A.J."/>
            <person name="Huber H."/>
            <person name="Hedderich R."/>
        </authorList>
    </citation>
    <scope>PROTEIN SEQUENCE OF 2-21</scope>
    <scope>FUNCTION</scope>
    <scope>SUBUNIT</scope>
    <scope>SUBCELLULAR LOCATION</scope>
</reference>
<feature type="chain" id="PRO_0000150071" description="Heterodisulfide reductase subunit B-like protein">
    <location>
        <begin position="1"/>
        <end position="299"/>
    </location>
</feature>
<feature type="sequence conflict" description="In Ref. 2; AA sequence." evidence="2" ref="2">
    <original>V</original>
    <variation>G</variation>
    <location>
        <position position="2"/>
    </location>
</feature>